<comment type="function">
    <text evidence="1">Involved in the modulation of the activity of the glucose-phosphotransferase system (glucose-PTS). Interacts with the transcriptional repressor Mlc, preventing its interaction with DNA and leading to the modulation of expression of genes regulated by Mlc, including ptsG, which encodes the PTS system glucose-specific EIICB component.</text>
</comment>
<comment type="function">
    <text evidence="1">Shows zinc-dependent metallopeptidase activity.</text>
</comment>
<comment type="cofactor">
    <cofactor evidence="1">
        <name>Zn(2+)</name>
        <dbReference type="ChEBI" id="CHEBI:29105"/>
    </cofactor>
    <text evidence="1">Binds 1 zinc ion per subunit.</text>
</comment>
<comment type="subunit">
    <text evidence="1">Interacts with Mlc.</text>
</comment>
<comment type="subcellular location">
    <subcellularLocation>
        <location evidence="1">Cytoplasm</location>
    </subcellularLocation>
</comment>
<comment type="similarity">
    <text evidence="1">Belongs to the MtfA family.</text>
</comment>
<reference key="1">
    <citation type="journal article" date="2001" name="Nature">
        <title>Genome sequence of Yersinia pestis, the causative agent of plague.</title>
        <authorList>
            <person name="Parkhill J."/>
            <person name="Wren B.W."/>
            <person name="Thomson N.R."/>
            <person name="Titball R.W."/>
            <person name="Holden M.T.G."/>
            <person name="Prentice M.B."/>
            <person name="Sebaihia M."/>
            <person name="James K.D."/>
            <person name="Churcher C.M."/>
            <person name="Mungall K.L."/>
            <person name="Baker S."/>
            <person name="Basham D."/>
            <person name="Bentley S.D."/>
            <person name="Brooks K."/>
            <person name="Cerdeno-Tarraga A.-M."/>
            <person name="Chillingworth T."/>
            <person name="Cronin A."/>
            <person name="Davies R.M."/>
            <person name="Davis P."/>
            <person name="Dougan G."/>
            <person name="Feltwell T."/>
            <person name="Hamlin N."/>
            <person name="Holroyd S."/>
            <person name="Jagels K."/>
            <person name="Karlyshev A.V."/>
            <person name="Leather S."/>
            <person name="Moule S."/>
            <person name="Oyston P.C.F."/>
            <person name="Quail M.A."/>
            <person name="Rutherford K.M."/>
            <person name="Simmonds M."/>
            <person name="Skelton J."/>
            <person name="Stevens K."/>
            <person name="Whitehead S."/>
            <person name="Barrell B.G."/>
        </authorList>
    </citation>
    <scope>NUCLEOTIDE SEQUENCE [LARGE SCALE GENOMIC DNA]</scope>
    <source>
        <strain>CO-92 / Biovar Orientalis</strain>
    </source>
</reference>
<reference key="2">
    <citation type="journal article" date="2002" name="J. Bacteriol.">
        <title>Genome sequence of Yersinia pestis KIM.</title>
        <authorList>
            <person name="Deng W."/>
            <person name="Burland V."/>
            <person name="Plunkett G. III"/>
            <person name="Boutin A."/>
            <person name="Mayhew G.F."/>
            <person name="Liss P."/>
            <person name="Perna N.T."/>
            <person name="Rose D.J."/>
            <person name="Mau B."/>
            <person name="Zhou S."/>
            <person name="Schwartz D.C."/>
            <person name="Fetherston J.D."/>
            <person name="Lindler L.E."/>
            <person name="Brubaker R.R."/>
            <person name="Plano G.V."/>
            <person name="Straley S.C."/>
            <person name="McDonough K.A."/>
            <person name="Nilles M.L."/>
            <person name="Matson J.S."/>
            <person name="Blattner F.R."/>
            <person name="Perry R.D."/>
        </authorList>
    </citation>
    <scope>NUCLEOTIDE SEQUENCE [LARGE SCALE GENOMIC DNA]</scope>
    <source>
        <strain>KIM10+ / Biovar Mediaevalis</strain>
    </source>
</reference>
<reference key="3">
    <citation type="journal article" date="2004" name="DNA Res.">
        <title>Complete genome sequence of Yersinia pestis strain 91001, an isolate avirulent to humans.</title>
        <authorList>
            <person name="Song Y."/>
            <person name="Tong Z."/>
            <person name="Wang J."/>
            <person name="Wang L."/>
            <person name="Guo Z."/>
            <person name="Han Y."/>
            <person name="Zhang J."/>
            <person name="Pei D."/>
            <person name="Zhou D."/>
            <person name="Qin H."/>
            <person name="Pang X."/>
            <person name="Han Y."/>
            <person name="Zhai J."/>
            <person name="Li M."/>
            <person name="Cui B."/>
            <person name="Qi Z."/>
            <person name="Jin L."/>
            <person name="Dai R."/>
            <person name="Chen F."/>
            <person name="Li S."/>
            <person name="Ye C."/>
            <person name="Du Z."/>
            <person name="Lin W."/>
            <person name="Wang J."/>
            <person name="Yu J."/>
            <person name="Yang H."/>
            <person name="Wang J."/>
            <person name="Huang P."/>
            <person name="Yang R."/>
        </authorList>
    </citation>
    <scope>NUCLEOTIDE SEQUENCE [LARGE SCALE GENOMIC DNA]</scope>
    <source>
        <strain>91001 / Biovar Mediaevalis</strain>
    </source>
</reference>
<name>MTFA_YERPE</name>
<gene>
    <name evidence="1" type="primary">mtfA</name>
    <name type="ordered locus">YPO1732</name>
    <name type="ordered locus">y2576</name>
    <name type="ordered locus">YP_1472</name>
</gene>
<organism>
    <name type="scientific">Yersinia pestis</name>
    <dbReference type="NCBI Taxonomy" id="632"/>
    <lineage>
        <taxon>Bacteria</taxon>
        <taxon>Pseudomonadati</taxon>
        <taxon>Pseudomonadota</taxon>
        <taxon>Gammaproteobacteria</taxon>
        <taxon>Enterobacterales</taxon>
        <taxon>Yersiniaceae</taxon>
        <taxon>Yersinia</taxon>
    </lineage>
</organism>
<evidence type="ECO:0000255" key="1">
    <source>
        <dbReference type="HAMAP-Rule" id="MF_01593"/>
    </source>
</evidence>
<protein>
    <recommendedName>
        <fullName evidence="1">Mlc titration factor A</fullName>
    </recommendedName>
    <alternativeName>
        <fullName evidence="1">Probable zinc metallopeptidase MtfA</fullName>
        <ecNumber evidence="1">3.4.11.-</ecNumber>
    </alternativeName>
</protein>
<keyword id="KW-0031">Aminopeptidase</keyword>
<keyword id="KW-0963">Cytoplasm</keyword>
<keyword id="KW-0378">Hydrolase</keyword>
<keyword id="KW-0479">Metal-binding</keyword>
<keyword id="KW-0482">Metalloprotease</keyword>
<keyword id="KW-0645">Protease</keyword>
<keyword id="KW-1185">Reference proteome</keyword>
<keyword id="KW-0862">Zinc</keyword>
<feature type="chain" id="PRO_0000316329" description="Mlc titration factor A">
    <location>
        <begin position="1"/>
        <end position="270"/>
    </location>
</feature>
<feature type="binding site" evidence="1">
    <location>
        <position position="111"/>
    </location>
    <ligand>
        <name>Zn(2+)</name>
        <dbReference type="ChEBI" id="CHEBI:29105"/>
    </ligand>
</feature>
<feature type="binding site" evidence="1">
    <location>
        <position position="148"/>
    </location>
    <ligand>
        <name>Zn(2+)</name>
        <dbReference type="ChEBI" id="CHEBI:29105"/>
    </ligand>
</feature>
<feature type="binding site" evidence="1">
    <location>
        <position position="152"/>
    </location>
    <ligand>
        <name>Zn(2+)</name>
        <dbReference type="ChEBI" id="CHEBI:29105"/>
    </ligand>
</feature>
<feature type="binding site" evidence="1">
    <location>
        <position position="211"/>
    </location>
    <ligand>
        <name>Zn(2+)</name>
        <dbReference type="ChEBI" id="CHEBI:29105"/>
    </ligand>
</feature>
<accession>Q7CHU1</accession>
<accession>Q74V60</accession>
<dbReference type="EC" id="3.4.11.-" evidence="1"/>
<dbReference type="EMBL" id="AL590842">
    <property type="protein sequence ID" value="CAL20374.1"/>
    <property type="molecule type" value="Genomic_DNA"/>
</dbReference>
<dbReference type="EMBL" id="AE009952">
    <property type="protein sequence ID" value="AAM86131.1"/>
    <property type="molecule type" value="Genomic_DNA"/>
</dbReference>
<dbReference type="EMBL" id="AE017042">
    <property type="protein sequence ID" value="AAS61711.1"/>
    <property type="molecule type" value="Genomic_DNA"/>
</dbReference>
<dbReference type="PIR" id="AC0211">
    <property type="entry name" value="AC0211"/>
</dbReference>
<dbReference type="RefSeq" id="WP_002211042.1">
    <property type="nucleotide sequence ID" value="NZ_WUCM01000019.1"/>
</dbReference>
<dbReference type="RefSeq" id="YP_002346732.1">
    <property type="nucleotide sequence ID" value="NC_003143.1"/>
</dbReference>
<dbReference type="SMR" id="Q7CHU1"/>
<dbReference type="IntAct" id="Q7CHU1">
    <property type="interactions" value="11"/>
</dbReference>
<dbReference type="STRING" id="214092.YPO1732"/>
<dbReference type="MEROPS" id="M90.001"/>
<dbReference type="PaxDb" id="214092-YPO1732"/>
<dbReference type="DNASU" id="1147523"/>
<dbReference type="EnsemblBacteria" id="AAS61711">
    <property type="protein sequence ID" value="AAS61711"/>
    <property type="gene ID" value="YP_1472"/>
</dbReference>
<dbReference type="GeneID" id="57976845"/>
<dbReference type="KEGG" id="ype:YPO1732"/>
<dbReference type="KEGG" id="ypk:y2576"/>
<dbReference type="KEGG" id="ypm:YP_1472"/>
<dbReference type="PATRIC" id="fig|214092.21.peg.2083"/>
<dbReference type="eggNOG" id="COG3228">
    <property type="taxonomic scope" value="Bacteria"/>
</dbReference>
<dbReference type="HOGENOM" id="CLU_063037_2_0_6"/>
<dbReference type="OMA" id="EHSGEAW"/>
<dbReference type="OrthoDB" id="9786424at2"/>
<dbReference type="Proteomes" id="UP000000815">
    <property type="component" value="Chromosome"/>
</dbReference>
<dbReference type="Proteomes" id="UP000001019">
    <property type="component" value="Chromosome"/>
</dbReference>
<dbReference type="Proteomes" id="UP000002490">
    <property type="component" value="Chromosome"/>
</dbReference>
<dbReference type="GO" id="GO:0005829">
    <property type="term" value="C:cytosol"/>
    <property type="evidence" value="ECO:0000318"/>
    <property type="project" value="GO_Central"/>
</dbReference>
<dbReference type="GO" id="GO:0004177">
    <property type="term" value="F:aminopeptidase activity"/>
    <property type="evidence" value="ECO:0000318"/>
    <property type="project" value="GO_Central"/>
</dbReference>
<dbReference type="GO" id="GO:0008237">
    <property type="term" value="F:metallopeptidase activity"/>
    <property type="evidence" value="ECO:0007669"/>
    <property type="project" value="UniProtKB-UniRule"/>
</dbReference>
<dbReference type="GO" id="GO:0008270">
    <property type="term" value="F:zinc ion binding"/>
    <property type="evidence" value="ECO:0007669"/>
    <property type="project" value="UniProtKB-UniRule"/>
</dbReference>
<dbReference type="GO" id="GO:0006508">
    <property type="term" value="P:proteolysis"/>
    <property type="evidence" value="ECO:0007669"/>
    <property type="project" value="UniProtKB-KW"/>
</dbReference>
<dbReference type="CDD" id="cd20169">
    <property type="entry name" value="Peptidase_M90_mtfA"/>
    <property type="match status" value="1"/>
</dbReference>
<dbReference type="FunFam" id="1.10.472.150:FF:000001">
    <property type="entry name" value="Protein MtfA"/>
    <property type="match status" value="1"/>
</dbReference>
<dbReference type="FunFam" id="3.40.390.10:FF:000012">
    <property type="entry name" value="Protein MtfA"/>
    <property type="match status" value="1"/>
</dbReference>
<dbReference type="Gene3D" id="3.40.390.10">
    <property type="entry name" value="Collagenase (Catalytic Domain)"/>
    <property type="match status" value="1"/>
</dbReference>
<dbReference type="Gene3D" id="1.10.472.150">
    <property type="entry name" value="Glucose-regulated metallo-peptidase M90, N-terminal domain"/>
    <property type="match status" value="1"/>
</dbReference>
<dbReference type="HAMAP" id="MF_01593">
    <property type="entry name" value="MtfA"/>
    <property type="match status" value="1"/>
</dbReference>
<dbReference type="InterPro" id="IPR024079">
    <property type="entry name" value="MetalloPept_cat_dom_sf"/>
</dbReference>
<dbReference type="InterPro" id="IPR057256">
    <property type="entry name" value="MtfA_enterob"/>
</dbReference>
<dbReference type="InterPro" id="IPR010384">
    <property type="entry name" value="MtfA_fam"/>
</dbReference>
<dbReference type="InterPro" id="IPR042252">
    <property type="entry name" value="MtfA_N"/>
</dbReference>
<dbReference type="NCBIfam" id="NF011939">
    <property type="entry name" value="PRK15410.1"/>
    <property type="match status" value="1"/>
</dbReference>
<dbReference type="PANTHER" id="PTHR30164">
    <property type="entry name" value="MTFA PEPTIDASE"/>
    <property type="match status" value="1"/>
</dbReference>
<dbReference type="PANTHER" id="PTHR30164:SF2">
    <property type="entry name" value="PROTEIN MTFA"/>
    <property type="match status" value="1"/>
</dbReference>
<dbReference type="Pfam" id="PF06167">
    <property type="entry name" value="Peptidase_M90"/>
    <property type="match status" value="1"/>
</dbReference>
<dbReference type="SUPFAM" id="SSF55486">
    <property type="entry name" value="Metalloproteases ('zincins'), catalytic domain"/>
    <property type="match status" value="1"/>
</dbReference>
<proteinExistence type="inferred from homology"/>
<sequence length="270" mass="30659">MIKWLWKANKPQAEMLAQWHEALNIPLLAPLNEPEQQRLVSVASQLLQQKRFIPLQGLILTPLMQARLALLFALPVMELGAKWLDGFHEVLIYPSPFIVAEDWQDDLGLVHSGQSVQSGQSWEQGPIVLNWQDIQDSFDLSGFNLVIHEAAHKLDMRNGGHSNGVPPIAMRDVAVWEHDLHHAMDNIQDEIDMVGVEGASMDAYAASNPAECFAVLSEYFFSAPELLEGRFPAVYQHFCRFYRQDPLARLKRWENSLADNPPPENTHSHR</sequence>